<gene>
    <name evidence="1" type="primary">rpoA</name>
    <name type="ordered locus">amb3108</name>
</gene>
<organism>
    <name type="scientific">Paramagnetospirillum magneticum (strain ATCC 700264 / AMB-1)</name>
    <name type="common">Magnetospirillum magneticum</name>
    <dbReference type="NCBI Taxonomy" id="342108"/>
    <lineage>
        <taxon>Bacteria</taxon>
        <taxon>Pseudomonadati</taxon>
        <taxon>Pseudomonadota</taxon>
        <taxon>Alphaproteobacteria</taxon>
        <taxon>Rhodospirillales</taxon>
        <taxon>Magnetospirillaceae</taxon>
        <taxon>Paramagnetospirillum</taxon>
    </lineage>
</organism>
<reference key="1">
    <citation type="journal article" date="2005" name="DNA Res.">
        <title>Complete genome sequence of the facultative anaerobic magnetotactic bacterium Magnetospirillum sp. strain AMB-1.</title>
        <authorList>
            <person name="Matsunaga T."/>
            <person name="Okamura Y."/>
            <person name="Fukuda Y."/>
            <person name="Wahyudi A.T."/>
            <person name="Murase Y."/>
            <person name="Takeyama H."/>
        </authorList>
    </citation>
    <scope>NUCLEOTIDE SEQUENCE [LARGE SCALE GENOMIC DNA]</scope>
    <source>
        <strain>ATCC 700264 / AMB-1</strain>
    </source>
</reference>
<feature type="chain" id="PRO_0000264512" description="DNA-directed RNA polymerase subunit alpha">
    <location>
        <begin position="1"/>
        <end position="338"/>
    </location>
</feature>
<feature type="region of interest" description="Alpha N-terminal domain (alpha-NTD)" evidence="1">
    <location>
        <begin position="1"/>
        <end position="234"/>
    </location>
</feature>
<feature type="region of interest" description="Alpha C-terminal domain (alpha-CTD)" evidence="1">
    <location>
        <begin position="250"/>
        <end position="338"/>
    </location>
</feature>
<name>RPOA_PARM1</name>
<keyword id="KW-0240">DNA-directed RNA polymerase</keyword>
<keyword id="KW-0548">Nucleotidyltransferase</keyword>
<keyword id="KW-0804">Transcription</keyword>
<keyword id="KW-0808">Transferase</keyword>
<dbReference type="EC" id="2.7.7.6" evidence="1"/>
<dbReference type="EMBL" id="AP007255">
    <property type="protein sequence ID" value="BAE51912.1"/>
    <property type="molecule type" value="Genomic_DNA"/>
</dbReference>
<dbReference type="RefSeq" id="WP_011385484.1">
    <property type="nucleotide sequence ID" value="NC_007626.1"/>
</dbReference>
<dbReference type="SMR" id="Q2W2L3"/>
<dbReference type="STRING" id="342108.amb3108"/>
<dbReference type="KEGG" id="mag:amb3108"/>
<dbReference type="HOGENOM" id="CLU_053084_0_1_5"/>
<dbReference type="OrthoDB" id="9805706at2"/>
<dbReference type="Proteomes" id="UP000007058">
    <property type="component" value="Chromosome"/>
</dbReference>
<dbReference type="GO" id="GO:0005737">
    <property type="term" value="C:cytoplasm"/>
    <property type="evidence" value="ECO:0007669"/>
    <property type="project" value="UniProtKB-ARBA"/>
</dbReference>
<dbReference type="GO" id="GO:0000428">
    <property type="term" value="C:DNA-directed RNA polymerase complex"/>
    <property type="evidence" value="ECO:0007669"/>
    <property type="project" value="UniProtKB-KW"/>
</dbReference>
<dbReference type="GO" id="GO:0003677">
    <property type="term" value="F:DNA binding"/>
    <property type="evidence" value="ECO:0007669"/>
    <property type="project" value="UniProtKB-UniRule"/>
</dbReference>
<dbReference type="GO" id="GO:0003899">
    <property type="term" value="F:DNA-directed RNA polymerase activity"/>
    <property type="evidence" value="ECO:0007669"/>
    <property type="project" value="UniProtKB-UniRule"/>
</dbReference>
<dbReference type="GO" id="GO:0046983">
    <property type="term" value="F:protein dimerization activity"/>
    <property type="evidence" value="ECO:0007669"/>
    <property type="project" value="InterPro"/>
</dbReference>
<dbReference type="GO" id="GO:0006351">
    <property type="term" value="P:DNA-templated transcription"/>
    <property type="evidence" value="ECO:0007669"/>
    <property type="project" value="UniProtKB-UniRule"/>
</dbReference>
<dbReference type="CDD" id="cd06928">
    <property type="entry name" value="RNAP_alpha_NTD"/>
    <property type="match status" value="1"/>
</dbReference>
<dbReference type="FunFam" id="1.10.150.20:FF:000001">
    <property type="entry name" value="DNA-directed RNA polymerase subunit alpha"/>
    <property type="match status" value="1"/>
</dbReference>
<dbReference type="FunFam" id="2.170.120.12:FF:000001">
    <property type="entry name" value="DNA-directed RNA polymerase subunit alpha"/>
    <property type="match status" value="1"/>
</dbReference>
<dbReference type="Gene3D" id="1.10.150.20">
    <property type="entry name" value="5' to 3' exonuclease, C-terminal subdomain"/>
    <property type="match status" value="1"/>
</dbReference>
<dbReference type="Gene3D" id="2.170.120.12">
    <property type="entry name" value="DNA-directed RNA polymerase, insert domain"/>
    <property type="match status" value="1"/>
</dbReference>
<dbReference type="Gene3D" id="3.30.1360.10">
    <property type="entry name" value="RNA polymerase, RBP11-like subunit"/>
    <property type="match status" value="1"/>
</dbReference>
<dbReference type="HAMAP" id="MF_00059">
    <property type="entry name" value="RNApol_bact_RpoA"/>
    <property type="match status" value="1"/>
</dbReference>
<dbReference type="InterPro" id="IPR011262">
    <property type="entry name" value="DNA-dir_RNA_pol_insert"/>
</dbReference>
<dbReference type="InterPro" id="IPR011263">
    <property type="entry name" value="DNA-dir_RNA_pol_RpoA/D/Rpb3"/>
</dbReference>
<dbReference type="InterPro" id="IPR011773">
    <property type="entry name" value="DNA-dir_RpoA"/>
</dbReference>
<dbReference type="InterPro" id="IPR036603">
    <property type="entry name" value="RBP11-like"/>
</dbReference>
<dbReference type="InterPro" id="IPR011260">
    <property type="entry name" value="RNAP_asu_C"/>
</dbReference>
<dbReference type="InterPro" id="IPR036643">
    <property type="entry name" value="RNApol_insert_sf"/>
</dbReference>
<dbReference type="NCBIfam" id="NF003513">
    <property type="entry name" value="PRK05182.1-2"/>
    <property type="match status" value="1"/>
</dbReference>
<dbReference type="NCBIfam" id="NF003519">
    <property type="entry name" value="PRK05182.2-5"/>
    <property type="match status" value="1"/>
</dbReference>
<dbReference type="NCBIfam" id="TIGR02027">
    <property type="entry name" value="rpoA"/>
    <property type="match status" value="1"/>
</dbReference>
<dbReference type="Pfam" id="PF01000">
    <property type="entry name" value="RNA_pol_A_bac"/>
    <property type="match status" value="1"/>
</dbReference>
<dbReference type="Pfam" id="PF03118">
    <property type="entry name" value="RNA_pol_A_CTD"/>
    <property type="match status" value="1"/>
</dbReference>
<dbReference type="Pfam" id="PF01193">
    <property type="entry name" value="RNA_pol_L"/>
    <property type="match status" value="1"/>
</dbReference>
<dbReference type="SMART" id="SM00662">
    <property type="entry name" value="RPOLD"/>
    <property type="match status" value="1"/>
</dbReference>
<dbReference type="SUPFAM" id="SSF47789">
    <property type="entry name" value="C-terminal domain of RNA polymerase alpha subunit"/>
    <property type="match status" value="1"/>
</dbReference>
<dbReference type="SUPFAM" id="SSF56553">
    <property type="entry name" value="Insert subdomain of RNA polymerase alpha subunit"/>
    <property type="match status" value="1"/>
</dbReference>
<dbReference type="SUPFAM" id="SSF55257">
    <property type="entry name" value="RBP11-like subunits of RNA polymerase"/>
    <property type="match status" value="1"/>
</dbReference>
<proteinExistence type="inferred from homology"/>
<accession>Q2W2L3</accession>
<comment type="function">
    <text evidence="1">DNA-dependent RNA polymerase catalyzes the transcription of DNA into RNA using the four ribonucleoside triphosphates as substrates.</text>
</comment>
<comment type="catalytic activity">
    <reaction evidence="1">
        <text>RNA(n) + a ribonucleoside 5'-triphosphate = RNA(n+1) + diphosphate</text>
        <dbReference type="Rhea" id="RHEA:21248"/>
        <dbReference type="Rhea" id="RHEA-COMP:14527"/>
        <dbReference type="Rhea" id="RHEA-COMP:17342"/>
        <dbReference type="ChEBI" id="CHEBI:33019"/>
        <dbReference type="ChEBI" id="CHEBI:61557"/>
        <dbReference type="ChEBI" id="CHEBI:140395"/>
        <dbReference type="EC" id="2.7.7.6"/>
    </reaction>
</comment>
<comment type="subunit">
    <text evidence="1">Homodimer. The RNAP catalytic core consists of 2 alpha, 1 beta, 1 beta' and 1 omega subunit. When a sigma factor is associated with the core the holoenzyme is formed, which can initiate transcription.</text>
</comment>
<comment type="domain">
    <text evidence="1">The N-terminal domain is essential for RNAP assembly and basal transcription, whereas the C-terminal domain is involved in interaction with transcriptional regulators and with upstream promoter elements.</text>
</comment>
<comment type="similarity">
    <text evidence="1">Belongs to the RNA polymerase alpha chain family.</text>
</comment>
<evidence type="ECO:0000255" key="1">
    <source>
        <dbReference type="HAMAP-Rule" id="MF_00059"/>
    </source>
</evidence>
<sequence length="338" mass="37453">MIQKNWQELIKPNKLHVEPGADPQRTAIVVAEPLERGFGMTLGNSLRRVLLSSLQGAAVTAIQIDGVLHEFSSIPGVREDVTDIILNIKTLGLRMHGEGPKRMHLRAVGPGEVTAGLIEVGHDIEIMDPELVLCTLDEGAKLNIEFTVETGKGYVPASQNRPEDSPIGLIPIDAIFSPVRKVAYKVENTRVGQVTDYDKLSMTVETNGAVTPDDAVALAARILQDQLQLFINFEEPTAVVEEEKKDELPFNKNLLRKVDELELSVRSANCLKNDNIIYIGDLVQKTEAEMLRTPNFGRKSLNEIKEVLAQMGLHLGMEIANWPPENIEELAKKLEEPY</sequence>
<protein>
    <recommendedName>
        <fullName evidence="1">DNA-directed RNA polymerase subunit alpha</fullName>
        <shortName evidence="1">RNAP subunit alpha</shortName>
        <ecNumber evidence="1">2.7.7.6</ecNumber>
    </recommendedName>
    <alternativeName>
        <fullName evidence="1">RNA polymerase subunit alpha</fullName>
    </alternativeName>
    <alternativeName>
        <fullName evidence="1">Transcriptase subunit alpha</fullName>
    </alternativeName>
</protein>